<reference key="1">
    <citation type="journal article" date="2007" name="Toxicon">
        <title>Cytolytic peptides belonging to the brevinin-1 and brevinin-2 families isolated from the skin of the Japanese brown frog, Rana dybowskii.</title>
        <authorList>
            <person name="Conlon J.M."/>
            <person name="Kolodziejek J."/>
            <person name="Nowotny N."/>
            <person name="Leprince J."/>
            <person name="Vaudry H."/>
            <person name="Coquet L."/>
            <person name="Jouenne T."/>
            <person name="Iwamuro S."/>
        </authorList>
    </citation>
    <scope>PROTEIN SEQUENCE</scope>
    <scope>FUNCTION</scope>
    <scope>MASS SPECTROMETRY</scope>
    <source>
        <tissue>Skin secretion</tissue>
    </source>
</reference>
<feature type="peptide" id="PRO_0000311602" description="Brevinin-2DYd">
    <location>
        <begin position="1"/>
        <end position="33"/>
    </location>
</feature>
<feature type="disulfide bond" evidence="1">
    <location>
        <begin position="27"/>
        <end position="33"/>
    </location>
</feature>
<accession>P0C5X4</accession>
<evidence type="ECO:0000250" key="1"/>
<evidence type="ECO:0000269" key="2">
    <source>
    </source>
</evidence>
<evidence type="ECO:0000305" key="3"/>
<name>BR2D_RANDY</name>
<comment type="function">
    <text evidence="2">Antimicrobial peptide. A mixture of Brevinin-2DYc/2DYd is active against the Gram-positive bacterium S.aureus (MIC=15 uM) and the Gram-negative bacterium E.coli (MIC=15 uM).</text>
</comment>
<comment type="subcellular location">
    <subcellularLocation>
        <location>Secreted</location>
    </subcellularLocation>
</comment>
<comment type="tissue specificity">
    <text>Expressed by the skin glands.</text>
</comment>
<comment type="mass spectrometry"/>
<comment type="similarity">
    <text evidence="3">Belongs to the frog skin active peptide (FSAP) family. Brevinin subfamily.</text>
</comment>
<keyword id="KW-0878">Amphibian defense peptide</keyword>
<keyword id="KW-0044">Antibiotic</keyword>
<keyword id="KW-0929">Antimicrobial</keyword>
<keyword id="KW-0903">Direct protein sequencing</keyword>
<keyword id="KW-1015">Disulfide bond</keyword>
<keyword id="KW-0964">Secreted</keyword>
<dbReference type="SMR" id="P0C5X4"/>
<dbReference type="GO" id="GO:0005576">
    <property type="term" value="C:extracellular region"/>
    <property type="evidence" value="ECO:0007669"/>
    <property type="project" value="UniProtKB-SubCell"/>
</dbReference>
<dbReference type="GO" id="GO:0042742">
    <property type="term" value="P:defense response to bacterium"/>
    <property type="evidence" value="ECO:0007669"/>
    <property type="project" value="UniProtKB-KW"/>
</dbReference>
<dbReference type="InterPro" id="IPR012521">
    <property type="entry name" value="Antimicrobial_frog_2"/>
</dbReference>
<dbReference type="Pfam" id="PF08023">
    <property type="entry name" value="Antimicrobial_2"/>
    <property type="match status" value="1"/>
</dbReference>
<organism>
    <name type="scientific">Rana dybowskii</name>
    <name type="common">Dybovsky's frog</name>
    <name type="synonym">Korean brown frog</name>
    <dbReference type="NCBI Taxonomy" id="71582"/>
    <lineage>
        <taxon>Eukaryota</taxon>
        <taxon>Metazoa</taxon>
        <taxon>Chordata</taxon>
        <taxon>Craniata</taxon>
        <taxon>Vertebrata</taxon>
        <taxon>Euteleostomi</taxon>
        <taxon>Amphibia</taxon>
        <taxon>Batrachia</taxon>
        <taxon>Anura</taxon>
        <taxon>Neobatrachia</taxon>
        <taxon>Ranoidea</taxon>
        <taxon>Ranidae</taxon>
        <taxon>Rana</taxon>
        <taxon>Rana</taxon>
    </lineage>
</organism>
<protein>
    <recommendedName>
        <fullName>Brevinin-2DYd</fullName>
    </recommendedName>
</protein>
<proteinExistence type="evidence at protein level"/>
<sequence>GIFDVVKGVLKGVGKNVAGSLLEQLKCKLSGGC</sequence>